<accession>P19089</accession>
<organism>
    <name type="scientific">Cryphonectria parasitica</name>
    <name type="common">Chestnut blight fungus</name>
    <name type="synonym">Endothia parasitica</name>
    <dbReference type="NCBI Taxonomy" id="5116"/>
    <lineage>
        <taxon>Eukaryota</taxon>
        <taxon>Fungi</taxon>
        <taxon>Dikarya</taxon>
        <taxon>Ascomycota</taxon>
        <taxon>Pezizomycotina</taxon>
        <taxon>Sordariomycetes</taxon>
        <taxon>Sordariomycetidae</taxon>
        <taxon>Diaporthales</taxon>
        <taxon>Cryphonectriaceae</taxon>
        <taxon>Cryphonectria-Endothia species complex</taxon>
        <taxon>Cryphonectria</taxon>
    </lineage>
</organism>
<keyword id="KW-0963">Cytoplasm</keyword>
<keyword id="KW-0324">Glycolysis</keyword>
<keyword id="KW-0520">NAD</keyword>
<keyword id="KW-0560">Oxidoreductase</keyword>
<proteinExistence type="inferred from homology"/>
<comment type="catalytic activity">
    <reaction evidence="2">
        <text>D-glyceraldehyde 3-phosphate + phosphate + NAD(+) = (2R)-3-phospho-glyceroyl phosphate + NADH + H(+)</text>
        <dbReference type="Rhea" id="RHEA:10300"/>
        <dbReference type="ChEBI" id="CHEBI:15378"/>
        <dbReference type="ChEBI" id="CHEBI:43474"/>
        <dbReference type="ChEBI" id="CHEBI:57540"/>
        <dbReference type="ChEBI" id="CHEBI:57604"/>
        <dbReference type="ChEBI" id="CHEBI:57945"/>
        <dbReference type="ChEBI" id="CHEBI:59776"/>
        <dbReference type="EC" id="1.2.1.12"/>
    </reaction>
</comment>
<comment type="pathway">
    <text>Carbohydrate degradation; glycolysis; pyruvate from D-glyceraldehyde 3-phosphate: step 1/5.</text>
</comment>
<comment type="subunit">
    <text>Homotetramer.</text>
</comment>
<comment type="subcellular location">
    <subcellularLocation>
        <location>Cytoplasm</location>
    </subcellularLocation>
</comment>
<comment type="similarity">
    <text evidence="3">Belongs to the glyceraldehyde-3-phosphate dehydrogenase family.</text>
</comment>
<protein>
    <recommendedName>
        <fullName>Glyceraldehyde-3-phosphate dehydrogenase</fullName>
        <shortName>GAPDH</shortName>
        <ecNumber>1.2.1.12</ecNumber>
    </recommendedName>
    <alternativeName>
        <fullName>GPD-1</fullName>
    </alternativeName>
</protein>
<dbReference type="EC" id="1.2.1.12"/>
<dbReference type="EMBL" id="X53996">
    <property type="protein sequence ID" value="CAA37943.1"/>
    <property type="molecule type" value="Genomic_DNA"/>
</dbReference>
<dbReference type="PIR" id="S11447">
    <property type="entry name" value="DEJJGC"/>
</dbReference>
<dbReference type="SMR" id="P19089"/>
<dbReference type="UniPathway" id="UPA00109">
    <property type="reaction ID" value="UER00184"/>
</dbReference>
<dbReference type="GO" id="GO:0005829">
    <property type="term" value="C:cytosol"/>
    <property type="evidence" value="ECO:0007669"/>
    <property type="project" value="TreeGrafter"/>
</dbReference>
<dbReference type="GO" id="GO:0004365">
    <property type="term" value="F:glyceraldehyde-3-phosphate dehydrogenase (NAD+) (phosphorylating) activity"/>
    <property type="evidence" value="ECO:0007669"/>
    <property type="project" value="UniProtKB-EC"/>
</dbReference>
<dbReference type="GO" id="GO:0051287">
    <property type="term" value="F:NAD binding"/>
    <property type="evidence" value="ECO:0007669"/>
    <property type="project" value="InterPro"/>
</dbReference>
<dbReference type="GO" id="GO:0050661">
    <property type="term" value="F:NADP binding"/>
    <property type="evidence" value="ECO:0007669"/>
    <property type="project" value="InterPro"/>
</dbReference>
<dbReference type="GO" id="GO:0006006">
    <property type="term" value="P:glucose metabolic process"/>
    <property type="evidence" value="ECO:0007669"/>
    <property type="project" value="InterPro"/>
</dbReference>
<dbReference type="GO" id="GO:0006096">
    <property type="term" value="P:glycolytic process"/>
    <property type="evidence" value="ECO:0007669"/>
    <property type="project" value="UniProtKB-UniPathway"/>
</dbReference>
<dbReference type="CDD" id="cd18126">
    <property type="entry name" value="GAPDH_I_C"/>
    <property type="match status" value="1"/>
</dbReference>
<dbReference type="CDD" id="cd05214">
    <property type="entry name" value="GAPDH_I_N"/>
    <property type="match status" value="1"/>
</dbReference>
<dbReference type="FunFam" id="3.30.360.10:FF:000001">
    <property type="entry name" value="Glyceraldehyde-3-phosphate dehydrogenase"/>
    <property type="match status" value="1"/>
</dbReference>
<dbReference type="FunFam" id="3.40.50.720:FF:000020">
    <property type="entry name" value="Glyceraldehyde-3-phosphate dehydrogenase"/>
    <property type="match status" value="1"/>
</dbReference>
<dbReference type="Gene3D" id="3.30.360.10">
    <property type="entry name" value="Dihydrodipicolinate Reductase, domain 2"/>
    <property type="match status" value="1"/>
</dbReference>
<dbReference type="Gene3D" id="3.40.50.720">
    <property type="entry name" value="NAD(P)-binding Rossmann-like Domain"/>
    <property type="match status" value="1"/>
</dbReference>
<dbReference type="InterPro" id="IPR020831">
    <property type="entry name" value="GlycerAld/Erythrose_P_DH"/>
</dbReference>
<dbReference type="InterPro" id="IPR020830">
    <property type="entry name" value="GlycerAld_3-P_DH_AS"/>
</dbReference>
<dbReference type="InterPro" id="IPR020829">
    <property type="entry name" value="GlycerAld_3-P_DH_cat"/>
</dbReference>
<dbReference type="InterPro" id="IPR020828">
    <property type="entry name" value="GlycerAld_3-P_DH_NAD(P)-bd"/>
</dbReference>
<dbReference type="InterPro" id="IPR006424">
    <property type="entry name" value="Glyceraldehyde-3-P_DH_1"/>
</dbReference>
<dbReference type="InterPro" id="IPR036291">
    <property type="entry name" value="NAD(P)-bd_dom_sf"/>
</dbReference>
<dbReference type="NCBIfam" id="TIGR01534">
    <property type="entry name" value="GAPDH-I"/>
    <property type="match status" value="1"/>
</dbReference>
<dbReference type="PANTHER" id="PTHR10836">
    <property type="entry name" value="GLYCERALDEHYDE 3-PHOSPHATE DEHYDROGENASE"/>
    <property type="match status" value="1"/>
</dbReference>
<dbReference type="PANTHER" id="PTHR10836:SF76">
    <property type="entry name" value="GLYCERALDEHYDE-3-PHOSPHATE DEHYDROGENASE-RELATED"/>
    <property type="match status" value="1"/>
</dbReference>
<dbReference type="Pfam" id="PF02800">
    <property type="entry name" value="Gp_dh_C"/>
    <property type="match status" value="1"/>
</dbReference>
<dbReference type="Pfam" id="PF00044">
    <property type="entry name" value="Gp_dh_N"/>
    <property type="match status" value="1"/>
</dbReference>
<dbReference type="PIRSF" id="PIRSF000149">
    <property type="entry name" value="GAP_DH"/>
    <property type="match status" value="1"/>
</dbReference>
<dbReference type="PRINTS" id="PR00078">
    <property type="entry name" value="G3PDHDRGNASE"/>
</dbReference>
<dbReference type="SMART" id="SM00846">
    <property type="entry name" value="Gp_dh_N"/>
    <property type="match status" value="1"/>
</dbReference>
<dbReference type="SUPFAM" id="SSF55347">
    <property type="entry name" value="Glyceraldehyde-3-phosphate dehydrogenase-like, C-terminal domain"/>
    <property type="match status" value="1"/>
</dbReference>
<dbReference type="SUPFAM" id="SSF51735">
    <property type="entry name" value="NAD(P)-binding Rossmann-fold domains"/>
    <property type="match status" value="1"/>
</dbReference>
<dbReference type="PROSITE" id="PS00071">
    <property type="entry name" value="GAPDH"/>
    <property type="match status" value="1"/>
</dbReference>
<feature type="chain" id="PRO_0000145550" description="Glyceraldehyde-3-phosphate dehydrogenase">
    <location>
        <begin position="1"/>
        <end position="337"/>
    </location>
</feature>
<feature type="active site" description="Nucleophile" evidence="2">
    <location>
        <position position="151"/>
    </location>
</feature>
<feature type="binding site" evidence="1">
    <location>
        <begin position="12"/>
        <end position="13"/>
    </location>
    <ligand>
        <name>NAD(+)</name>
        <dbReference type="ChEBI" id="CHEBI:57540"/>
    </ligand>
</feature>
<feature type="binding site" evidence="1">
    <location>
        <position position="34"/>
    </location>
    <ligand>
        <name>NAD(+)</name>
        <dbReference type="ChEBI" id="CHEBI:57540"/>
    </ligand>
</feature>
<feature type="binding site" evidence="1">
    <location>
        <position position="79"/>
    </location>
    <ligand>
        <name>NAD(+)</name>
        <dbReference type="ChEBI" id="CHEBI:57540"/>
    </ligand>
</feature>
<feature type="binding site" evidence="1">
    <location>
        <begin position="150"/>
        <end position="152"/>
    </location>
    <ligand>
        <name>D-glyceraldehyde 3-phosphate</name>
        <dbReference type="ChEBI" id="CHEBI:59776"/>
    </ligand>
</feature>
<feature type="binding site" evidence="1">
    <location>
        <position position="181"/>
    </location>
    <ligand>
        <name>D-glyceraldehyde 3-phosphate</name>
        <dbReference type="ChEBI" id="CHEBI:59776"/>
    </ligand>
</feature>
<feature type="binding site" evidence="1">
    <location>
        <begin position="210"/>
        <end position="211"/>
    </location>
    <ligand>
        <name>D-glyceraldehyde 3-phosphate</name>
        <dbReference type="ChEBI" id="CHEBI:59776"/>
    </ligand>
</feature>
<feature type="binding site" evidence="1">
    <location>
        <position position="233"/>
    </location>
    <ligand>
        <name>D-glyceraldehyde 3-phosphate</name>
        <dbReference type="ChEBI" id="CHEBI:59776"/>
    </ligand>
</feature>
<feature type="binding site" evidence="1">
    <location>
        <position position="315"/>
    </location>
    <ligand>
        <name>NAD(+)</name>
        <dbReference type="ChEBI" id="CHEBI:57540"/>
    </ligand>
</feature>
<feature type="site" description="Activates thiol group during catalysis" evidence="1">
    <location>
        <position position="178"/>
    </location>
</feature>
<sequence>MVVKVGINGFGRIGRIVFRNAHEHSDVEIVAVNDPFIEPHYAAYMLKYDSQHGNFKGDVTVEGSDLVVGGKKVRFYTERDPAAIPWSETGADYIVESTGVFTTTEKAKAHLKGGAKKVIISAPSADAPMYVMGVNEKTYDGSGMVISNASCTTNCLAPLAKVINDEFKIIEGLMTTVHSYTATQKTVDGPSAKDWRGGRTAAQNIIPSSTGAAKAVGKVIPELNGKLTGMSMRVPTSNVSVVDLTVRIEKGATYEQIKTAVKKAADGPLKGVLAYTEDDVVSTDMNGNPNSSIFDAKAGISLNDHFVKLVSWYDNEWGYSRRVLDLISHVAKVDGNA</sequence>
<evidence type="ECO:0000250" key="1"/>
<evidence type="ECO:0000255" key="2">
    <source>
        <dbReference type="PROSITE-ProRule" id="PRU10009"/>
    </source>
</evidence>
<evidence type="ECO:0000305" key="3"/>
<name>G3P_CRYPA</name>
<reference key="1">
    <citation type="journal article" date="1990" name="Nucleic Acids Res.">
        <title>Nucleotide sequence of the glyceraldehyde-3-phosphate dehydrogenase gene from Cryphonectria parasitica.</title>
        <authorList>
            <person name="Choi G.H."/>
            <person name="Nuss D.L."/>
        </authorList>
    </citation>
    <scope>NUCLEOTIDE SEQUENCE [GENOMIC DNA]</scope>
</reference>